<dbReference type="EC" id="5.2.1.8"/>
<dbReference type="EMBL" id="AE005174">
    <property type="protein sequence ID" value="AAG58454.1"/>
    <property type="molecule type" value="Genomic_DNA"/>
</dbReference>
<dbReference type="EMBL" id="BA000007">
    <property type="protein sequence ID" value="BAB37621.1"/>
    <property type="molecule type" value="Genomic_DNA"/>
</dbReference>
<dbReference type="PIR" id="B85999">
    <property type="entry name" value="B85999"/>
</dbReference>
<dbReference type="PIR" id="F91153">
    <property type="entry name" value="F91153"/>
</dbReference>
<dbReference type="RefSeq" id="NP_312225.1">
    <property type="nucleotide sequence ID" value="NC_002695.1"/>
</dbReference>
<dbReference type="RefSeq" id="WP_000838261.1">
    <property type="nucleotide sequence ID" value="NZ_VOAI01000004.1"/>
</dbReference>
<dbReference type="BMRB" id="P65765"/>
<dbReference type="SMR" id="P65765"/>
<dbReference type="STRING" id="155864.Z4705"/>
<dbReference type="GeneID" id="915949"/>
<dbReference type="GeneID" id="93778651"/>
<dbReference type="KEGG" id="ece:Z4705"/>
<dbReference type="KEGG" id="ecs:ECs_4198"/>
<dbReference type="PATRIC" id="fig|386585.9.peg.4381"/>
<dbReference type="eggNOG" id="COG0545">
    <property type="taxonomic scope" value="Bacteria"/>
</dbReference>
<dbReference type="HOGENOM" id="CLU_013615_0_2_6"/>
<dbReference type="OMA" id="PAEFKLN"/>
<dbReference type="Proteomes" id="UP000000558">
    <property type="component" value="Chromosome"/>
</dbReference>
<dbReference type="Proteomes" id="UP000002519">
    <property type="component" value="Chromosome"/>
</dbReference>
<dbReference type="GO" id="GO:0042597">
    <property type="term" value="C:periplasmic space"/>
    <property type="evidence" value="ECO:0007669"/>
    <property type="project" value="UniProtKB-SubCell"/>
</dbReference>
<dbReference type="GO" id="GO:0003755">
    <property type="term" value="F:peptidyl-prolyl cis-trans isomerase activity"/>
    <property type="evidence" value="ECO:0007669"/>
    <property type="project" value="UniProtKB-KW"/>
</dbReference>
<dbReference type="GO" id="GO:0006457">
    <property type="term" value="P:protein folding"/>
    <property type="evidence" value="ECO:0007669"/>
    <property type="project" value="InterPro"/>
</dbReference>
<dbReference type="FunFam" id="1.10.287.460:FF:000002">
    <property type="entry name" value="Peptidyl-prolyl cis-trans isomerase"/>
    <property type="match status" value="1"/>
</dbReference>
<dbReference type="FunFam" id="3.10.50.40:FF:000004">
    <property type="entry name" value="Peptidyl-prolyl cis-trans isomerase"/>
    <property type="match status" value="1"/>
</dbReference>
<dbReference type="Gene3D" id="3.10.50.40">
    <property type="match status" value="1"/>
</dbReference>
<dbReference type="Gene3D" id="1.10.287.460">
    <property type="entry name" value="Peptidyl-prolyl cis-trans isomerase, FKBP-type, N-terminal domain"/>
    <property type="match status" value="1"/>
</dbReference>
<dbReference type="InterPro" id="IPR046357">
    <property type="entry name" value="PPIase_dom_sf"/>
</dbReference>
<dbReference type="InterPro" id="IPR001179">
    <property type="entry name" value="PPIase_FKBP_dom"/>
</dbReference>
<dbReference type="InterPro" id="IPR000774">
    <property type="entry name" value="PPIase_FKBP_N"/>
</dbReference>
<dbReference type="InterPro" id="IPR036944">
    <property type="entry name" value="PPIase_FKBP_N_sf"/>
</dbReference>
<dbReference type="NCBIfam" id="NF008150">
    <property type="entry name" value="PRK10902.1"/>
    <property type="match status" value="1"/>
</dbReference>
<dbReference type="PANTHER" id="PTHR43811:SF19">
    <property type="entry name" value="39 KDA FK506-BINDING NUCLEAR PROTEIN"/>
    <property type="match status" value="1"/>
</dbReference>
<dbReference type="PANTHER" id="PTHR43811">
    <property type="entry name" value="FKBP-TYPE PEPTIDYL-PROLYL CIS-TRANS ISOMERASE FKPA"/>
    <property type="match status" value="1"/>
</dbReference>
<dbReference type="Pfam" id="PF00254">
    <property type="entry name" value="FKBP_C"/>
    <property type="match status" value="1"/>
</dbReference>
<dbReference type="Pfam" id="PF01346">
    <property type="entry name" value="FKBP_N"/>
    <property type="match status" value="1"/>
</dbReference>
<dbReference type="SUPFAM" id="SSF54534">
    <property type="entry name" value="FKBP-like"/>
    <property type="match status" value="1"/>
</dbReference>
<dbReference type="PROSITE" id="PS50059">
    <property type="entry name" value="FKBP_PPIASE"/>
    <property type="match status" value="1"/>
</dbReference>
<evidence type="ECO:0000250" key="1"/>
<evidence type="ECO:0000255" key="2">
    <source>
        <dbReference type="PROSITE-ProRule" id="PRU00277"/>
    </source>
</evidence>
<evidence type="ECO:0000305" key="3"/>
<comment type="function">
    <text>PPIases accelerate the folding of proteins. It catalyzes the cis-trans isomerization of proline imidic peptide bonds in oligopeptides.</text>
</comment>
<comment type="catalytic activity">
    <reaction>
        <text>[protein]-peptidylproline (omega=180) = [protein]-peptidylproline (omega=0)</text>
        <dbReference type="Rhea" id="RHEA:16237"/>
        <dbReference type="Rhea" id="RHEA-COMP:10747"/>
        <dbReference type="Rhea" id="RHEA-COMP:10748"/>
        <dbReference type="ChEBI" id="CHEBI:83833"/>
        <dbReference type="ChEBI" id="CHEBI:83834"/>
        <dbReference type="EC" id="5.2.1.8"/>
    </reaction>
</comment>
<comment type="subcellular location">
    <subcellularLocation>
        <location evidence="1">Periplasm</location>
    </subcellularLocation>
</comment>
<comment type="similarity">
    <text evidence="3">Belongs to the FKBP-type PPIase family.</text>
</comment>
<proteinExistence type="inferred from homology"/>
<name>FKBA_ECO57</name>
<reference key="1">
    <citation type="journal article" date="2001" name="Nature">
        <title>Genome sequence of enterohaemorrhagic Escherichia coli O157:H7.</title>
        <authorList>
            <person name="Perna N.T."/>
            <person name="Plunkett G. III"/>
            <person name="Burland V."/>
            <person name="Mau B."/>
            <person name="Glasner J.D."/>
            <person name="Rose D.J."/>
            <person name="Mayhew G.F."/>
            <person name="Evans P.S."/>
            <person name="Gregor J."/>
            <person name="Kirkpatrick H.A."/>
            <person name="Posfai G."/>
            <person name="Hackett J."/>
            <person name="Klink S."/>
            <person name="Boutin A."/>
            <person name="Shao Y."/>
            <person name="Miller L."/>
            <person name="Grotbeck E.J."/>
            <person name="Davis N.W."/>
            <person name="Lim A."/>
            <person name="Dimalanta E.T."/>
            <person name="Potamousis K."/>
            <person name="Apodaca J."/>
            <person name="Anantharaman T.S."/>
            <person name="Lin J."/>
            <person name="Yen G."/>
            <person name="Schwartz D.C."/>
            <person name="Welch R.A."/>
            <person name="Blattner F.R."/>
        </authorList>
    </citation>
    <scope>NUCLEOTIDE SEQUENCE [LARGE SCALE GENOMIC DNA]</scope>
    <source>
        <strain>O157:H7 / EDL933 / ATCC 700927 / EHEC</strain>
    </source>
</reference>
<reference key="2">
    <citation type="journal article" date="2001" name="DNA Res.">
        <title>Complete genome sequence of enterohemorrhagic Escherichia coli O157:H7 and genomic comparison with a laboratory strain K-12.</title>
        <authorList>
            <person name="Hayashi T."/>
            <person name="Makino K."/>
            <person name="Ohnishi M."/>
            <person name="Kurokawa K."/>
            <person name="Ishii K."/>
            <person name="Yokoyama K."/>
            <person name="Han C.-G."/>
            <person name="Ohtsubo E."/>
            <person name="Nakayama K."/>
            <person name="Murata T."/>
            <person name="Tanaka M."/>
            <person name="Tobe T."/>
            <person name="Iida T."/>
            <person name="Takami H."/>
            <person name="Honda T."/>
            <person name="Sasakawa C."/>
            <person name="Ogasawara N."/>
            <person name="Yasunaga T."/>
            <person name="Kuhara S."/>
            <person name="Shiba T."/>
            <person name="Hattori M."/>
            <person name="Shinagawa H."/>
        </authorList>
    </citation>
    <scope>NUCLEOTIDE SEQUENCE [LARGE SCALE GENOMIC DNA]</scope>
    <source>
        <strain>O157:H7 / Sakai / RIMD 0509952 / EHEC</strain>
    </source>
</reference>
<protein>
    <recommendedName>
        <fullName>FKBP-type peptidyl-prolyl cis-trans isomerase FkpA</fullName>
        <shortName>PPIase</shortName>
        <ecNumber>5.2.1.8</ecNumber>
    </recommendedName>
    <alternativeName>
        <fullName>Rotamase</fullName>
    </alternativeName>
</protein>
<accession>P65765</accession>
<accession>Q8X880</accession>
<gene>
    <name type="primary">fkpA</name>
    <name type="ordered locus">Z4705</name>
    <name type="ordered locus">ECs4198</name>
</gene>
<feature type="signal peptide">
    <location>
        <begin position="1"/>
        <end position="25"/>
    </location>
</feature>
<feature type="chain" id="PRO_0000025538" description="FKBP-type peptidyl-prolyl cis-trans isomerase FkpA">
    <location>
        <begin position="26"/>
        <end position="270"/>
    </location>
</feature>
<feature type="domain" description="PPIase FKBP-type" evidence="2">
    <location>
        <begin position="164"/>
        <end position="249"/>
    </location>
</feature>
<organism>
    <name type="scientific">Escherichia coli O157:H7</name>
    <dbReference type="NCBI Taxonomy" id="83334"/>
    <lineage>
        <taxon>Bacteria</taxon>
        <taxon>Pseudomonadati</taxon>
        <taxon>Pseudomonadota</taxon>
        <taxon>Gammaproteobacteria</taxon>
        <taxon>Enterobacterales</taxon>
        <taxon>Enterobacteriaceae</taxon>
        <taxon>Escherichia</taxon>
    </lineage>
</organism>
<keyword id="KW-0413">Isomerase</keyword>
<keyword id="KW-0574">Periplasm</keyword>
<keyword id="KW-1185">Reference proteome</keyword>
<keyword id="KW-0697">Rotamase</keyword>
<keyword id="KW-0732">Signal</keyword>
<sequence>MKSLFKVTLLATTMAVALHAPITFAAEAAKPATTADSKAAFKNDDQKSAYALGASLGRYMENSLKEQEKLGIKLDKDQLIAGVQDAFADKSKLSDQEIEQTLQAFEARVKSSAQAKMEKDAADNEAKGKEYREKFAKEKGVKTSSTGLVYQVVEAGKGEAPKDSDTVVVNYKGTLIDGKEFDNSYTRGEPLSFRLDGVIPGWTEGLKNIKKGGKIKLVIPPELAYGKAGVPGIPPNSTLVFDVELLDVKPAPKADAKPEADAKAADSAKK</sequence>